<reference key="1">
    <citation type="submission" date="2007-04" db="EMBL/GenBank/DDBJ databases">
        <title>Complete sequence of chromosome of Mycobacterium gilvum PYR-GCK.</title>
        <authorList>
            <consortium name="US DOE Joint Genome Institute"/>
            <person name="Copeland A."/>
            <person name="Lucas S."/>
            <person name="Lapidus A."/>
            <person name="Barry K."/>
            <person name="Detter J.C."/>
            <person name="Glavina del Rio T."/>
            <person name="Hammon N."/>
            <person name="Israni S."/>
            <person name="Dalin E."/>
            <person name="Tice H."/>
            <person name="Pitluck S."/>
            <person name="Chain P."/>
            <person name="Malfatti S."/>
            <person name="Shin M."/>
            <person name="Vergez L."/>
            <person name="Schmutz J."/>
            <person name="Larimer F."/>
            <person name="Land M."/>
            <person name="Hauser L."/>
            <person name="Kyrpides N."/>
            <person name="Mikhailova N."/>
            <person name="Miller C."/>
            <person name="Richardson P."/>
        </authorList>
    </citation>
    <scope>NUCLEOTIDE SEQUENCE [LARGE SCALE GENOMIC DNA]</scope>
    <source>
        <strain>PYR-GCK</strain>
    </source>
</reference>
<proteinExistence type="inferred from homology"/>
<protein>
    <recommendedName>
        <fullName evidence="1">Na(+)/H(+) antiporter NhaA 2</fullName>
    </recommendedName>
    <alternativeName>
        <fullName evidence="1">Sodium/proton antiporter NhaA 2</fullName>
    </alternativeName>
</protein>
<evidence type="ECO:0000255" key="1">
    <source>
        <dbReference type="HAMAP-Rule" id="MF_01844"/>
    </source>
</evidence>
<name>NHAA2_MYCGI</name>
<organism>
    <name type="scientific">Mycolicibacterium gilvum (strain PYR-GCK)</name>
    <name type="common">Mycobacterium gilvum (strain PYR-GCK)</name>
    <dbReference type="NCBI Taxonomy" id="350054"/>
    <lineage>
        <taxon>Bacteria</taxon>
        <taxon>Bacillati</taxon>
        <taxon>Actinomycetota</taxon>
        <taxon>Actinomycetes</taxon>
        <taxon>Mycobacteriales</taxon>
        <taxon>Mycobacteriaceae</taxon>
        <taxon>Mycolicibacterium</taxon>
    </lineage>
</organism>
<keyword id="KW-0050">Antiport</keyword>
<keyword id="KW-1003">Cell membrane</keyword>
<keyword id="KW-0406">Ion transport</keyword>
<keyword id="KW-0472">Membrane</keyword>
<keyword id="KW-0915">Sodium</keyword>
<keyword id="KW-0739">Sodium transport</keyword>
<keyword id="KW-0812">Transmembrane</keyword>
<keyword id="KW-1133">Transmembrane helix</keyword>
<keyword id="KW-0813">Transport</keyword>
<feature type="chain" id="PRO_0000334337" description="Na(+)/H(+) antiporter NhaA 2">
    <location>
        <begin position="1"/>
        <end position="447"/>
    </location>
</feature>
<feature type="transmembrane region" description="Helical" evidence="1">
    <location>
        <begin position="34"/>
        <end position="54"/>
    </location>
</feature>
<feature type="transmembrane region" description="Helical" evidence="1">
    <location>
        <begin position="77"/>
        <end position="97"/>
    </location>
</feature>
<feature type="transmembrane region" description="Helical" evidence="1">
    <location>
        <begin position="115"/>
        <end position="135"/>
    </location>
</feature>
<feature type="transmembrane region" description="Helical" evidence="1">
    <location>
        <begin position="146"/>
        <end position="166"/>
    </location>
</feature>
<feature type="transmembrane region" description="Helical" evidence="1">
    <location>
        <begin position="176"/>
        <end position="196"/>
    </location>
</feature>
<feature type="transmembrane region" description="Helical" evidence="1">
    <location>
        <begin position="200"/>
        <end position="220"/>
    </location>
</feature>
<feature type="transmembrane region" description="Helical" evidence="1">
    <location>
        <begin position="290"/>
        <end position="310"/>
    </location>
</feature>
<feature type="transmembrane region" description="Helical" evidence="1">
    <location>
        <begin position="321"/>
        <end position="341"/>
    </location>
</feature>
<feature type="transmembrane region" description="Helical" evidence="1">
    <location>
        <begin position="359"/>
        <end position="379"/>
    </location>
</feature>
<feature type="transmembrane region" description="Helical" evidence="1">
    <location>
        <begin position="393"/>
        <end position="413"/>
    </location>
</feature>
<sequence>MAATPLPPPRRPVFSRGSWAETRRVTEILRKETVGGVILLVAAAAALIWANSPWAEGYFALRDLELGGEWFGLHLNLTLGAWAADGLLAIFFLVVGLELKREFVAGDLRDPSRAALPIAAAVGGMVVPALIFVLVNLNTGDGALRGWAIPTATDIAFAVAVLAVIGTHLPSALRTFLLTLAVVDDLLAITVIAVFYTEDINGLALALAAVPLALFALCVQRGVQKWWVLVPLSVATWVLMHESGVHATVAGVLLGFAVPVRRQATPRGRGPAPSQRVGMAEYFEHRVRPVSAGIAIPVFAFFAAGVSIGGLDGFTRALSDPITLGIVLGLVLGKPIGIVLTTRVLSAVTRANLDASLRWVDVVGMSMLAGIGFTVSLLIGDLAYGLGSERDEFVKIGVLFGSLLAAGVAAVVLLTRNRAYRRIYREETVDEDRDGVPDVYQTRQDRT</sequence>
<dbReference type="EMBL" id="CP000656">
    <property type="protein sequence ID" value="ABP46395.1"/>
    <property type="molecule type" value="Genomic_DNA"/>
</dbReference>
<dbReference type="SMR" id="A4TCS6"/>
<dbReference type="STRING" id="350054.Mflv_3924"/>
<dbReference type="KEGG" id="mgi:Mflv_3924"/>
<dbReference type="eggNOG" id="COG3004">
    <property type="taxonomic scope" value="Bacteria"/>
</dbReference>
<dbReference type="HOGENOM" id="CLU_015803_0_0_11"/>
<dbReference type="OrthoDB" id="9808135at2"/>
<dbReference type="GO" id="GO:0005886">
    <property type="term" value="C:plasma membrane"/>
    <property type="evidence" value="ECO:0007669"/>
    <property type="project" value="UniProtKB-SubCell"/>
</dbReference>
<dbReference type="GO" id="GO:0015385">
    <property type="term" value="F:sodium:proton antiporter activity"/>
    <property type="evidence" value="ECO:0007669"/>
    <property type="project" value="TreeGrafter"/>
</dbReference>
<dbReference type="GO" id="GO:0006885">
    <property type="term" value="P:regulation of pH"/>
    <property type="evidence" value="ECO:0007669"/>
    <property type="project" value="InterPro"/>
</dbReference>
<dbReference type="Gene3D" id="1.20.1530.10">
    <property type="entry name" value="Na+/H+ antiporter like domain"/>
    <property type="match status" value="1"/>
</dbReference>
<dbReference type="HAMAP" id="MF_01844">
    <property type="entry name" value="NhaA"/>
    <property type="match status" value="1"/>
</dbReference>
<dbReference type="InterPro" id="IPR023171">
    <property type="entry name" value="Na/H_antiporter_dom_sf"/>
</dbReference>
<dbReference type="InterPro" id="IPR004670">
    <property type="entry name" value="NhaA"/>
</dbReference>
<dbReference type="NCBIfam" id="TIGR00773">
    <property type="entry name" value="NhaA"/>
    <property type="match status" value="1"/>
</dbReference>
<dbReference type="PANTHER" id="PTHR30341:SF0">
    <property type="entry name" value="NA(+)_H(+) ANTIPORTER NHAA"/>
    <property type="match status" value="1"/>
</dbReference>
<dbReference type="PANTHER" id="PTHR30341">
    <property type="entry name" value="SODIUM ION/PROTON ANTIPORTER NHAA-RELATED"/>
    <property type="match status" value="1"/>
</dbReference>
<dbReference type="Pfam" id="PF06965">
    <property type="entry name" value="Na_H_antiport_1"/>
    <property type="match status" value="1"/>
</dbReference>
<comment type="function">
    <text evidence="1">Na(+)/H(+) antiporter that extrudes sodium in exchange for external protons.</text>
</comment>
<comment type="catalytic activity">
    <reaction evidence="1">
        <text>Na(+)(in) + 2 H(+)(out) = Na(+)(out) + 2 H(+)(in)</text>
        <dbReference type="Rhea" id="RHEA:29251"/>
        <dbReference type="ChEBI" id="CHEBI:15378"/>
        <dbReference type="ChEBI" id="CHEBI:29101"/>
    </reaction>
    <physiologicalReaction direction="left-to-right" evidence="1">
        <dbReference type="Rhea" id="RHEA:29252"/>
    </physiologicalReaction>
</comment>
<comment type="subcellular location">
    <subcellularLocation>
        <location evidence="1">Cell membrane</location>
        <topology evidence="1">Multi-pass membrane protein</topology>
    </subcellularLocation>
</comment>
<comment type="similarity">
    <text evidence="1">Belongs to the NhaA Na(+)/H(+) (TC 2.A.33) antiporter family.</text>
</comment>
<accession>A4TCS6</accession>
<gene>
    <name evidence="1" type="primary">nhaA2</name>
    <name type="ordered locus">Mflv_3924</name>
</gene>